<dbReference type="EMBL" id="CP000552">
    <property type="protein sequence ID" value="ABM72906.1"/>
    <property type="molecule type" value="Genomic_DNA"/>
</dbReference>
<dbReference type="RefSeq" id="WP_011820998.1">
    <property type="nucleotide sequence ID" value="NC_008817.1"/>
</dbReference>
<dbReference type="SMR" id="A2BYP5"/>
<dbReference type="STRING" id="167542.P9515_16991"/>
<dbReference type="GeneID" id="60201914"/>
<dbReference type="KEGG" id="pmc:P9515_16991"/>
<dbReference type="eggNOG" id="ENOG5033UPE">
    <property type="taxonomic scope" value="Bacteria"/>
</dbReference>
<dbReference type="HOGENOM" id="CLU_092204_1_0_3"/>
<dbReference type="OrthoDB" id="464381at2"/>
<dbReference type="Proteomes" id="UP000001589">
    <property type="component" value="Chromosome"/>
</dbReference>
<dbReference type="GO" id="GO:0009538">
    <property type="term" value="C:photosystem I reaction center"/>
    <property type="evidence" value="ECO:0007669"/>
    <property type="project" value="InterPro"/>
</dbReference>
<dbReference type="GO" id="GO:0031676">
    <property type="term" value="C:plasma membrane-derived thylakoid membrane"/>
    <property type="evidence" value="ECO:0007669"/>
    <property type="project" value="UniProtKB-SubCell"/>
</dbReference>
<dbReference type="GO" id="GO:0015979">
    <property type="term" value="P:photosynthesis"/>
    <property type="evidence" value="ECO:0007669"/>
    <property type="project" value="UniProtKB-UniRule"/>
</dbReference>
<dbReference type="Gene3D" id="1.20.1240.10">
    <property type="entry name" value="Photosystem I PsaL, reaction centre subunit XI"/>
    <property type="match status" value="1"/>
</dbReference>
<dbReference type="HAMAP" id="MF_00447">
    <property type="entry name" value="PSI_PsaL"/>
    <property type="match status" value="1"/>
</dbReference>
<dbReference type="InterPro" id="IPR003757">
    <property type="entry name" value="PSI_PsaL"/>
</dbReference>
<dbReference type="InterPro" id="IPR036592">
    <property type="entry name" value="PSI_PsaL_sf"/>
</dbReference>
<dbReference type="InterPro" id="IPR022980">
    <property type="entry name" value="PSI_suXI"/>
</dbReference>
<dbReference type="NCBIfam" id="NF001925">
    <property type="entry name" value="PRK00704.1-1"/>
    <property type="match status" value="1"/>
</dbReference>
<dbReference type="NCBIfam" id="NF001928">
    <property type="entry name" value="PRK00704.1-5"/>
    <property type="match status" value="1"/>
</dbReference>
<dbReference type="PANTHER" id="PTHR34803">
    <property type="entry name" value="PHOTOSYSTEM I REACTION CENTER SUBUNIT XI, CHLOROPLASTIC"/>
    <property type="match status" value="1"/>
</dbReference>
<dbReference type="PANTHER" id="PTHR34803:SF2">
    <property type="entry name" value="PHOTOSYSTEM I REACTION CENTER SUBUNIT XI, CHLOROPLASTIC"/>
    <property type="match status" value="1"/>
</dbReference>
<dbReference type="Pfam" id="PF02605">
    <property type="entry name" value="PsaL"/>
    <property type="match status" value="1"/>
</dbReference>
<dbReference type="SUPFAM" id="SSF81568">
    <property type="entry name" value="Photosystem I reaction center subunit XI, PsaL"/>
    <property type="match status" value="1"/>
</dbReference>
<organism>
    <name type="scientific">Prochlorococcus marinus (strain MIT 9515)</name>
    <dbReference type="NCBI Taxonomy" id="167542"/>
    <lineage>
        <taxon>Bacteria</taxon>
        <taxon>Bacillati</taxon>
        <taxon>Cyanobacteriota</taxon>
        <taxon>Cyanophyceae</taxon>
        <taxon>Synechococcales</taxon>
        <taxon>Prochlorococcaceae</taxon>
        <taxon>Prochlorococcus</taxon>
    </lineage>
</organism>
<protein>
    <recommendedName>
        <fullName evidence="1">Photosystem I reaction center subunit XI</fullName>
    </recommendedName>
    <alternativeName>
        <fullName evidence="1">PSI subunit V</fullName>
    </alternativeName>
    <alternativeName>
        <fullName evidence="1">PSI-L</fullName>
    </alternativeName>
</protein>
<sequence>MSDFQKSFSESTNSIKFDDKYRDNSVQPDDIGVANQWAVKTVADPCVGNLATPVNSGYFTKAFINNLPFYREGISPNFRGLETGAAFGYLLYGPFTMTGPLRNSDFAITAGLLAAIGAVHIMTALLVLYNAPGKAPNVQPPDATVNNPPADLFTRAGWADFTSGFWLGGCGGAVFAWLLVGTLHLDTIMPIIKNIWTAG</sequence>
<keyword id="KW-0472">Membrane</keyword>
<keyword id="KW-0602">Photosynthesis</keyword>
<keyword id="KW-0603">Photosystem I</keyword>
<keyword id="KW-0793">Thylakoid</keyword>
<keyword id="KW-0812">Transmembrane</keyword>
<keyword id="KW-1133">Transmembrane helix</keyword>
<feature type="chain" id="PRO_1000026179" description="Photosystem I reaction center subunit XI">
    <location>
        <begin position="1"/>
        <end position="199"/>
    </location>
</feature>
<feature type="transmembrane region" description="Helical" evidence="1">
    <location>
        <begin position="108"/>
        <end position="128"/>
    </location>
</feature>
<feature type="transmembrane region" description="Helical" evidence="1">
    <location>
        <begin position="165"/>
        <end position="185"/>
    </location>
</feature>
<accession>A2BYP5</accession>
<proteinExistence type="inferred from homology"/>
<gene>
    <name evidence="1" type="primary">psaL</name>
    <name type="ordered locus">P9515_16991</name>
</gene>
<name>PSAL_PROM5</name>
<comment type="subcellular location">
    <subcellularLocation>
        <location evidence="1">Cellular thylakoid membrane</location>
        <topology evidence="1">Multi-pass membrane protein</topology>
    </subcellularLocation>
</comment>
<comment type="similarity">
    <text evidence="1">Belongs to the PsaL family.</text>
</comment>
<evidence type="ECO:0000255" key="1">
    <source>
        <dbReference type="HAMAP-Rule" id="MF_00447"/>
    </source>
</evidence>
<reference key="1">
    <citation type="journal article" date="2007" name="PLoS Genet.">
        <title>Patterns and implications of gene gain and loss in the evolution of Prochlorococcus.</title>
        <authorList>
            <person name="Kettler G.C."/>
            <person name="Martiny A.C."/>
            <person name="Huang K."/>
            <person name="Zucker J."/>
            <person name="Coleman M.L."/>
            <person name="Rodrigue S."/>
            <person name="Chen F."/>
            <person name="Lapidus A."/>
            <person name="Ferriera S."/>
            <person name="Johnson J."/>
            <person name="Steglich C."/>
            <person name="Church G.M."/>
            <person name="Richardson P."/>
            <person name="Chisholm S.W."/>
        </authorList>
    </citation>
    <scope>NUCLEOTIDE SEQUENCE [LARGE SCALE GENOMIC DNA]</scope>
    <source>
        <strain>MIT 9515</strain>
    </source>
</reference>